<feature type="chain" id="PRO_0000332090" description="Chaperonin GroEL 1">
    <location>
        <begin position="1"/>
        <end position="553"/>
    </location>
</feature>
<feature type="region of interest" description="Disordered" evidence="2">
    <location>
        <begin position="520"/>
        <end position="543"/>
    </location>
</feature>
<feature type="compositionally biased region" description="Gly residues" evidence="2">
    <location>
        <begin position="528"/>
        <end position="543"/>
    </location>
</feature>
<feature type="binding site" evidence="1">
    <location>
        <begin position="29"/>
        <end position="32"/>
    </location>
    <ligand>
        <name>ATP</name>
        <dbReference type="ChEBI" id="CHEBI:30616"/>
    </ligand>
</feature>
<feature type="binding site" evidence="1">
    <location>
        <begin position="86"/>
        <end position="90"/>
    </location>
    <ligand>
        <name>ATP</name>
        <dbReference type="ChEBI" id="CHEBI:30616"/>
    </ligand>
</feature>
<feature type="binding site" evidence="1">
    <location>
        <position position="413"/>
    </location>
    <ligand>
        <name>ATP</name>
        <dbReference type="ChEBI" id="CHEBI:30616"/>
    </ligand>
</feature>
<feature type="binding site" evidence="1">
    <location>
        <begin position="476"/>
        <end position="478"/>
    </location>
    <ligand>
        <name>ATP</name>
        <dbReference type="ChEBI" id="CHEBI:30616"/>
    </ligand>
</feature>
<feature type="binding site" evidence="1">
    <location>
        <position position="492"/>
    </location>
    <ligand>
        <name>ATP</name>
        <dbReference type="ChEBI" id="CHEBI:30616"/>
    </ligand>
</feature>
<reference key="1">
    <citation type="journal article" date="2006" name="Proc. Natl. Acad. Sci. U.S.A.">
        <title>Genome sequence of Synechococcus CC9311: insights into adaptation to a coastal environment.</title>
        <authorList>
            <person name="Palenik B."/>
            <person name="Ren Q."/>
            <person name="Dupont C.L."/>
            <person name="Myers G.S."/>
            <person name="Heidelberg J.F."/>
            <person name="Badger J.H."/>
            <person name="Madupu R."/>
            <person name="Nelson W.C."/>
            <person name="Brinkac L.M."/>
            <person name="Dodson R.J."/>
            <person name="Durkin A.S."/>
            <person name="Daugherty S.C."/>
            <person name="Sullivan S.A."/>
            <person name="Khouri H."/>
            <person name="Mohamoud Y."/>
            <person name="Halpin R."/>
            <person name="Paulsen I.T."/>
        </authorList>
    </citation>
    <scope>NUCLEOTIDE SEQUENCE [LARGE SCALE GENOMIC DNA]</scope>
    <source>
        <strain>CC9311</strain>
    </source>
</reference>
<sequence length="553" mass="57942">MAKLLSFSNESRESLERGMNALADAVRVTIGPRGRNVVLEKSYGSPDIVNDGDTIAKEIELADPFENIGAKLIQQVASKTKDKAGDGTTTATVLAQAMVEEGLRNTAAGASPIELRRGMEKAVAAVVASLNQRSQSVSGDAIRQVATVSSGGDEEVGRMVAEAMDRVSFDGVITVEESKSLATELEVTEGMAFDRGYSSPYFVTDGDRQICEFENALLLLTDRKISSVTDLVPVLETVQKSGSPLVILAEEVDGEALATLVVNKNRGVLQVAAVRAPSFGERRKAALADIAVLTGGQVISEDRAMTLDKVTMEDLGRARRITISKDSTTIVASDDSKEAVSARVASIKRELDNTDSEYDQEKLNERIAKLAGGVAVIKVGAPTETELKNRKLRIEDALNATRAAVEEGIVAGGGSTLLHISAELDALTSGLEGDQKTGVEIVQRALSAPLRQIAENAGSNGDVVVDRVRNSGEGFNALTGNFEDLMNAGILDASKVVRLALQDAVSIASLVVTTEVVVADKPEPPAPAGGGGDPMGGMGGMDPMGGMGGMGMM</sequence>
<evidence type="ECO:0000255" key="1">
    <source>
        <dbReference type="HAMAP-Rule" id="MF_00600"/>
    </source>
</evidence>
<evidence type="ECO:0000256" key="2">
    <source>
        <dbReference type="SAM" id="MobiDB-lite"/>
    </source>
</evidence>
<name>CH601_SYNS3</name>
<proteinExistence type="inferred from homology"/>
<accession>Q0I885</accession>
<keyword id="KW-0067">ATP-binding</keyword>
<keyword id="KW-0143">Chaperone</keyword>
<keyword id="KW-0963">Cytoplasm</keyword>
<keyword id="KW-0413">Isomerase</keyword>
<keyword id="KW-0547">Nucleotide-binding</keyword>
<keyword id="KW-1185">Reference proteome</keyword>
<dbReference type="EC" id="5.6.1.7" evidence="1"/>
<dbReference type="EMBL" id="CP000435">
    <property type="protein sequence ID" value="ABI45274.1"/>
    <property type="molecule type" value="Genomic_DNA"/>
</dbReference>
<dbReference type="RefSeq" id="WP_011620049.1">
    <property type="nucleotide sequence ID" value="NC_008319.1"/>
</dbReference>
<dbReference type="SMR" id="Q0I885"/>
<dbReference type="STRING" id="64471.sync_2135"/>
<dbReference type="KEGG" id="syg:sync_2135"/>
<dbReference type="eggNOG" id="COG0459">
    <property type="taxonomic scope" value="Bacteria"/>
</dbReference>
<dbReference type="HOGENOM" id="CLU_016503_3_0_3"/>
<dbReference type="OrthoDB" id="9766614at2"/>
<dbReference type="Proteomes" id="UP000001961">
    <property type="component" value="Chromosome"/>
</dbReference>
<dbReference type="GO" id="GO:0005737">
    <property type="term" value="C:cytoplasm"/>
    <property type="evidence" value="ECO:0007669"/>
    <property type="project" value="UniProtKB-SubCell"/>
</dbReference>
<dbReference type="GO" id="GO:0005524">
    <property type="term" value="F:ATP binding"/>
    <property type="evidence" value="ECO:0007669"/>
    <property type="project" value="UniProtKB-UniRule"/>
</dbReference>
<dbReference type="GO" id="GO:0140662">
    <property type="term" value="F:ATP-dependent protein folding chaperone"/>
    <property type="evidence" value="ECO:0007669"/>
    <property type="project" value="InterPro"/>
</dbReference>
<dbReference type="GO" id="GO:0016853">
    <property type="term" value="F:isomerase activity"/>
    <property type="evidence" value="ECO:0007669"/>
    <property type="project" value="UniProtKB-KW"/>
</dbReference>
<dbReference type="GO" id="GO:0051082">
    <property type="term" value="F:unfolded protein binding"/>
    <property type="evidence" value="ECO:0007669"/>
    <property type="project" value="UniProtKB-UniRule"/>
</dbReference>
<dbReference type="GO" id="GO:0042026">
    <property type="term" value="P:protein refolding"/>
    <property type="evidence" value="ECO:0007669"/>
    <property type="project" value="UniProtKB-UniRule"/>
</dbReference>
<dbReference type="CDD" id="cd03344">
    <property type="entry name" value="GroEL"/>
    <property type="match status" value="1"/>
</dbReference>
<dbReference type="FunFam" id="3.50.7.10:FF:000001">
    <property type="entry name" value="60 kDa chaperonin"/>
    <property type="match status" value="1"/>
</dbReference>
<dbReference type="Gene3D" id="3.50.7.10">
    <property type="entry name" value="GroEL"/>
    <property type="match status" value="1"/>
</dbReference>
<dbReference type="Gene3D" id="1.10.560.10">
    <property type="entry name" value="GroEL-like equatorial domain"/>
    <property type="match status" value="1"/>
</dbReference>
<dbReference type="Gene3D" id="3.30.260.10">
    <property type="entry name" value="TCP-1-like chaperonin intermediate domain"/>
    <property type="match status" value="1"/>
</dbReference>
<dbReference type="HAMAP" id="MF_00600">
    <property type="entry name" value="CH60"/>
    <property type="match status" value="1"/>
</dbReference>
<dbReference type="InterPro" id="IPR018370">
    <property type="entry name" value="Chaperonin_Cpn60_CS"/>
</dbReference>
<dbReference type="InterPro" id="IPR001844">
    <property type="entry name" value="Cpn60/GroEL"/>
</dbReference>
<dbReference type="InterPro" id="IPR002423">
    <property type="entry name" value="Cpn60/GroEL/TCP-1"/>
</dbReference>
<dbReference type="InterPro" id="IPR027409">
    <property type="entry name" value="GroEL-like_apical_dom_sf"/>
</dbReference>
<dbReference type="InterPro" id="IPR027413">
    <property type="entry name" value="GROEL-like_equatorial_sf"/>
</dbReference>
<dbReference type="InterPro" id="IPR027410">
    <property type="entry name" value="TCP-1-like_intermed_sf"/>
</dbReference>
<dbReference type="NCBIfam" id="TIGR02348">
    <property type="entry name" value="GroEL"/>
    <property type="match status" value="1"/>
</dbReference>
<dbReference type="NCBIfam" id="NF000592">
    <property type="entry name" value="PRK00013.1"/>
    <property type="match status" value="1"/>
</dbReference>
<dbReference type="NCBIfam" id="NF009487">
    <property type="entry name" value="PRK12849.1"/>
    <property type="match status" value="1"/>
</dbReference>
<dbReference type="NCBIfam" id="NF009488">
    <property type="entry name" value="PRK12850.1"/>
    <property type="match status" value="1"/>
</dbReference>
<dbReference type="NCBIfam" id="NF009489">
    <property type="entry name" value="PRK12851.1"/>
    <property type="match status" value="1"/>
</dbReference>
<dbReference type="PANTHER" id="PTHR45633">
    <property type="entry name" value="60 KDA HEAT SHOCK PROTEIN, MITOCHONDRIAL"/>
    <property type="match status" value="1"/>
</dbReference>
<dbReference type="Pfam" id="PF00118">
    <property type="entry name" value="Cpn60_TCP1"/>
    <property type="match status" value="1"/>
</dbReference>
<dbReference type="PRINTS" id="PR00298">
    <property type="entry name" value="CHAPERONIN60"/>
</dbReference>
<dbReference type="SUPFAM" id="SSF52029">
    <property type="entry name" value="GroEL apical domain-like"/>
    <property type="match status" value="1"/>
</dbReference>
<dbReference type="SUPFAM" id="SSF48592">
    <property type="entry name" value="GroEL equatorial domain-like"/>
    <property type="match status" value="1"/>
</dbReference>
<dbReference type="SUPFAM" id="SSF54849">
    <property type="entry name" value="GroEL-intermediate domain like"/>
    <property type="match status" value="1"/>
</dbReference>
<dbReference type="PROSITE" id="PS00296">
    <property type="entry name" value="CHAPERONINS_CPN60"/>
    <property type="match status" value="1"/>
</dbReference>
<protein>
    <recommendedName>
        <fullName evidence="1">Chaperonin GroEL 1</fullName>
        <ecNumber evidence="1">5.6.1.7</ecNumber>
    </recommendedName>
    <alternativeName>
        <fullName evidence="1">60 kDa chaperonin 1</fullName>
    </alternativeName>
    <alternativeName>
        <fullName evidence="1">Chaperonin-60 1</fullName>
        <shortName evidence="1">Cpn60 1</shortName>
    </alternativeName>
</protein>
<comment type="function">
    <text evidence="1">Together with its co-chaperonin GroES, plays an essential role in assisting protein folding. The GroEL-GroES system forms a nano-cage that allows encapsulation of the non-native substrate proteins and provides a physical environment optimized to promote and accelerate protein folding.</text>
</comment>
<comment type="catalytic activity">
    <reaction evidence="1">
        <text>ATP + H2O + a folded polypeptide = ADP + phosphate + an unfolded polypeptide.</text>
        <dbReference type="EC" id="5.6.1.7"/>
    </reaction>
</comment>
<comment type="subunit">
    <text evidence="1">Forms a cylinder of 14 subunits composed of two heptameric rings stacked back-to-back. Interacts with the co-chaperonin GroES.</text>
</comment>
<comment type="subcellular location">
    <subcellularLocation>
        <location evidence="1">Cytoplasm</location>
    </subcellularLocation>
</comment>
<comment type="similarity">
    <text evidence="1">Belongs to the chaperonin (HSP60) family.</text>
</comment>
<organism>
    <name type="scientific">Synechococcus sp. (strain CC9311)</name>
    <dbReference type="NCBI Taxonomy" id="64471"/>
    <lineage>
        <taxon>Bacteria</taxon>
        <taxon>Bacillati</taxon>
        <taxon>Cyanobacteriota</taxon>
        <taxon>Cyanophyceae</taxon>
        <taxon>Synechococcales</taxon>
        <taxon>Synechococcaceae</taxon>
        <taxon>Synechococcus</taxon>
    </lineage>
</organism>
<gene>
    <name evidence="1" type="primary">groEL1</name>
    <name evidence="1" type="synonym">groL1</name>
    <name type="ordered locus">sync_2135</name>
</gene>